<evidence type="ECO:0000250" key="1"/>
<evidence type="ECO:0000255" key="2">
    <source>
        <dbReference type="PROSITE-ProRule" id="PRU00711"/>
    </source>
</evidence>
<evidence type="ECO:0000305" key="3"/>
<proteinExistence type="evidence at transcript level"/>
<reference key="1">
    <citation type="journal article" date="1994" name="J. Bacteriol.">
        <title>The fas operon of Rhodococcus fascians encodes new genes required for efficient fasciation of host plants.</title>
        <authorList>
            <person name="Crespi M."/>
            <person name="Vereecke D."/>
            <person name="Temmerman W."/>
            <person name="van Montagu M."/>
            <person name="Desomer J."/>
        </authorList>
    </citation>
    <scope>NUCLEOTIDE SEQUENCE [GENOMIC DNA]</scope>
    <source>
        <strain>D188</strain>
    </source>
</reference>
<dbReference type="EMBL" id="Z29635">
    <property type="protein sequence ID" value="CAA82742.1"/>
    <property type="molecule type" value="Genomic_DNA"/>
</dbReference>
<dbReference type="PIR" id="B55578">
    <property type="entry name" value="B55578"/>
</dbReference>
<dbReference type="RefSeq" id="YP_007878705.1">
    <property type="nucleotide sequence ID" value="NC_021080.1"/>
</dbReference>
<dbReference type="SMR" id="P46374"/>
<dbReference type="STRING" id="1443905.GCA_000761075_00039"/>
<dbReference type="eggNOG" id="COG3959">
    <property type="taxonomic scope" value="Bacteria"/>
</dbReference>
<dbReference type="GO" id="GO:0051538">
    <property type="term" value="F:3 iron, 4 sulfur cluster binding"/>
    <property type="evidence" value="ECO:0007669"/>
    <property type="project" value="UniProtKB-KW"/>
</dbReference>
<dbReference type="GO" id="GO:0000287">
    <property type="term" value="F:magnesium ion binding"/>
    <property type="evidence" value="ECO:0007669"/>
    <property type="project" value="UniProtKB-ARBA"/>
</dbReference>
<dbReference type="Gene3D" id="3.30.70.20">
    <property type="match status" value="1"/>
</dbReference>
<dbReference type="Gene3D" id="3.40.50.970">
    <property type="match status" value="1"/>
</dbReference>
<dbReference type="InterPro" id="IPR017896">
    <property type="entry name" value="4Fe4S_Fe-S-bd"/>
</dbReference>
<dbReference type="InterPro" id="IPR029061">
    <property type="entry name" value="THDP-binding"/>
</dbReference>
<dbReference type="InterPro" id="IPR005474">
    <property type="entry name" value="Transketolase_N"/>
</dbReference>
<dbReference type="PANTHER" id="PTHR47514:SF2">
    <property type="entry name" value="TRANSKETOLASE"/>
    <property type="match status" value="1"/>
</dbReference>
<dbReference type="PANTHER" id="PTHR47514">
    <property type="entry name" value="TRANSKETOLASE N-TERMINAL SECTION-RELATED"/>
    <property type="match status" value="1"/>
</dbReference>
<dbReference type="Pfam" id="PF13370">
    <property type="entry name" value="Fer4_13"/>
    <property type="match status" value="1"/>
</dbReference>
<dbReference type="Pfam" id="PF00456">
    <property type="entry name" value="Transketolase_N"/>
    <property type="match status" value="1"/>
</dbReference>
<dbReference type="SUPFAM" id="SSF54862">
    <property type="entry name" value="4Fe-4S ferredoxins"/>
    <property type="match status" value="1"/>
</dbReference>
<dbReference type="SUPFAM" id="SSF52518">
    <property type="entry name" value="Thiamin diphosphate-binding fold (THDP-binding)"/>
    <property type="match status" value="1"/>
</dbReference>
<dbReference type="PROSITE" id="PS51379">
    <property type="entry name" value="4FE4S_FER_2"/>
    <property type="match status" value="1"/>
</dbReference>
<organism>
    <name type="scientific">Rhodococcoides fascians</name>
    <name type="common">Rhodococcus fascians</name>
    <dbReference type="NCBI Taxonomy" id="1828"/>
    <lineage>
        <taxon>Bacteria</taxon>
        <taxon>Bacillati</taxon>
        <taxon>Actinomycetota</taxon>
        <taxon>Actinomycetes</taxon>
        <taxon>Mycobacteriales</taxon>
        <taxon>Nocardiaceae</taxon>
        <taxon>Rhodococcoides</taxon>
    </lineage>
</organism>
<gene>
    <name type="primary">fas2</name>
    <name type="synonym">fdx</name>
</gene>
<geneLocation type="plasmid">
    <name>pFiD188</name>
</geneLocation>
<sequence>MKVVVNERRCFGSGQCVLVAPEVFEQSNDGTVTLLVDKPSPDNHSLVRAAARSCPATAIRFEENAMRQEPTEFSYDDLPALISRMRGDERHSFSSSSTMDVLWVLYDEIPNVSPESPDDDDRDRFLLSKGHGPMAYYAVLAAKGFLRPELLDTWATKNSPLGFAPDRTKISGVEMSGGSLGHGLPLAVGVAMGLRIQNRHAPRVFVLIGDGEFDEGSNHEAMAFAGRARLNQLTVIVLDNGTASMGWPHGIDKRFDGEGWDTININGADHEEIAAALNRDHNDRPLAVVATVTRQSARSSIQQR</sequence>
<protein>
    <recommendedName>
        <fullName>Ferredoxin fas2</fullName>
    </recommendedName>
</protein>
<accession>P46374</accession>
<feature type="chain" id="PRO_0000159318" description="Ferredoxin fas2">
    <location>
        <begin position="1"/>
        <end position="304"/>
    </location>
</feature>
<feature type="domain" description="4Fe-4S ferredoxin-type" evidence="2">
    <location>
        <begin position="2"/>
        <end position="29"/>
    </location>
</feature>
<feature type="region of interest" description="Transketolase-like">
    <location>
        <begin position="66"/>
        <end position="304"/>
    </location>
</feature>
<feature type="binding site" evidence="1">
    <location>
        <position position="10"/>
    </location>
    <ligand>
        <name>[3Fe-4S] cluster</name>
        <dbReference type="ChEBI" id="CHEBI:21137"/>
    </ligand>
</feature>
<feature type="binding site" evidence="1">
    <location>
        <position position="16"/>
    </location>
    <ligand>
        <name>[3Fe-4S] cluster</name>
        <dbReference type="ChEBI" id="CHEBI:21137"/>
    </ligand>
</feature>
<feature type="binding site" evidence="1">
    <location>
        <position position="54"/>
    </location>
    <ligand>
        <name>[3Fe-4S] cluster</name>
        <dbReference type="ChEBI" id="CHEBI:21137"/>
    </ligand>
</feature>
<name>FAS2_RHOFA</name>
<comment type="function">
    <text>Plays a role in electron transfer. The fas operon encodes genes involved in cytokinin production and in host plant fasciation (leafy gall).</text>
</comment>
<comment type="cofactor">
    <cofactor evidence="1">
        <name>[3Fe-4S] cluster</name>
        <dbReference type="ChEBI" id="CHEBI:21137"/>
    </cofactor>
    <text evidence="1">Binds 1 [3Fe-4S] cluster.</text>
</comment>
<comment type="induction">
    <text>During the interaction with host plants.</text>
</comment>
<comment type="similarity">
    <text evidence="3">In the C-terminal section; belongs to the transketolase family.</text>
</comment>
<keyword id="KW-0003">3Fe-4S</keyword>
<keyword id="KW-0249">Electron transport</keyword>
<keyword id="KW-0408">Iron</keyword>
<keyword id="KW-0411">Iron-sulfur</keyword>
<keyword id="KW-0479">Metal-binding</keyword>
<keyword id="KW-0614">Plasmid</keyword>
<keyword id="KW-0813">Transport</keyword>